<name>Y3252_ALBFT</name>
<protein>
    <recommendedName>
        <fullName>UPF0758 protein Rfer_3252</fullName>
    </recommendedName>
</protein>
<comment type="similarity">
    <text evidence="2">Belongs to the UPF0758 family.</text>
</comment>
<sequence>MPLKDLPPDARPREKLLARGPGALSDVELLAVLLRTGIKGKGVLQMARELLELKKSGSDDNDGFDGIAGLLHATSDDLKRIKGLGPAKRAELVAVLELSRRALAQQLKERTIFATPDAVKHYLQLHLAAKPHEVFAVLFLDVQNRLLALEELFRGTLTQTSVYPREVVLRALHHQASSVVLAHNHPSGTVQPSRADEMLTQTLKTTLALIDVRVLDHVIVAPGEALSMAERGLL</sequence>
<reference key="1">
    <citation type="submission" date="2006-02" db="EMBL/GenBank/DDBJ databases">
        <title>Complete sequence of chromosome of Rhodoferax ferrireducens DSM 15236.</title>
        <authorList>
            <person name="Copeland A."/>
            <person name="Lucas S."/>
            <person name="Lapidus A."/>
            <person name="Barry K."/>
            <person name="Detter J.C."/>
            <person name="Glavina del Rio T."/>
            <person name="Hammon N."/>
            <person name="Israni S."/>
            <person name="Pitluck S."/>
            <person name="Brettin T."/>
            <person name="Bruce D."/>
            <person name="Han C."/>
            <person name="Tapia R."/>
            <person name="Gilna P."/>
            <person name="Kiss H."/>
            <person name="Schmutz J."/>
            <person name="Larimer F."/>
            <person name="Land M."/>
            <person name="Kyrpides N."/>
            <person name="Ivanova N."/>
            <person name="Richardson P."/>
        </authorList>
    </citation>
    <scope>NUCLEOTIDE SEQUENCE [LARGE SCALE GENOMIC DNA]</scope>
    <source>
        <strain>ATCC BAA-621 / DSM 15236 / T118</strain>
    </source>
</reference>
<gene>
    <name type="ordered locus">Rfer_3252</name>
</gene>
<organism>
    <name type="scientific">Albidiferax ferrireducens (strain ATCC BAA-621 / DSM 15236 / T118)</name>
    <name type="common">Rhodoferax ferrireducens</name>
    <dbReference type="NCBI Taxonomy" id="338969"/>
    <lineage>
        <taxon>Bacteria</taxon>
        <taxon>Pseudomonadati</taxon>
        <taxon>Pseudomonadota</taxon>
        <taxon>Betaproteobacteria</taxon>
        <taxon>Burkholderiales</taxon>
        <taxon>Comamonadaceae</taxon>
        <taxon>Rhodoferax</taxon>
    </lineage>
</organism>
<evidence type="ECO:0000255" key="1">
    <source>
        <dbReference type="PROSITE-ProRule" id="PRU01182"/>
    </source>
</evidence>
<evidence type="ECO:0000305" key="2"/>
<keyword id="KW-0378">Hydrolase</keyword>
<keyword id="KW-0479">Metal-binding</keyword>
<keyword id="KW-0482">Metalloprotease</keyword>
<keyword id="KW-0645">Protease</keyword>
<keyword id="KW-1185">Reference proteome</keyword>
<keyword id="KW-0862">Zinc</keyword>
<accession>Q21TE2</accession>
<proteinExistence type="inferred from homology"/>
<feature type="chain" id="PRO_1000070981" description="UPF0758 protein Rfer_3252">
    <location>
        <begin position="1"/>
        <end position="234"/>
    </location>
</feature>
<feature type="domain" description="MPN" evidence="1">
    <location>
        <begin position="112"/>
        <end position="234"/>
    </location>
</feature>
<feature type="short sequence motif" description="JAMM motif" evidence="1">
    <location>
        <begin position="183"/>
        <end position="196"/>
    </location>
</feature>
<feature type="binding site" evidence="1">
    <location>
        <position position="183"/>
    </location>
    <ligand>
        <name>Zn(2+)</name>
        <dbReference type="ChEBI" id="CHEBI:29105"/>
        <note>catalytic</note>
    </ligand>
</feature>
<feature type="binding site" evidence="1">
    <location>
        <position position="185"/>
    </location>
    <ligand>
        <name>Zn(2+)</name>
        <dbReference type="ChEBI" id="CHEBI:29105"/>
        <note>catalytic</note>
    </ligand>
</feature>
<feature type="binding site" evidence="1">
    <location>
        <position position="196"/>
    </location>
    <ligand>
        <name>Zn(2+)</name>
        <dbReference type="ChEBI" id="CHEBI:29105"/>
        <note>catalytic</note>
    </ligand>
</feature>
<dbReference type="EMBL" id="CP000267">
    <property type="protein sequence ID" value="ABD70961.1"/>
    <property type="molecule type" value="Genomic_DNA"/>
</dbReference>
<dbReference type="RefSeq" id="WP_011465524.1">
    <property type="nucleotide sequence ID" value="NC_007908.1"/>
</dbReference>
<dbReference type="SMR" id="Q21TE2"/>
<dbReference type="STRING" id="338969.Rfer_3252"/>
<dbReference type="KEGG" id="rfr:Rfer_3252"/>
<dbReference type="eggNOG" id="COG2003">
    <property type="taxonomic scope" value="Bacteria"/>
</dbReference>
<dbReference type="HOGENOM" id="CLU_073529_0_1_4"/>
<dbReference type="OrthoDB" id="9804482at2"/>
<dbReference type="Proteomes" id="UP000008332">
    <property type="component" value="Chromosome"/>
</dbReference>
<dbReference type="GO" id="GO:0046872">
    <property type="term" value="F:metal ion binding"/>
    <property type="evidence" value="ECO:0007669"/>
    <property type="project" value="UniProtKB-KW"/>
</dbReference>
<dbReference type="GO" id="GO:0008237">
    <property type="term" value="F:metallopeptidase activity"/>
    <property type="evidence" value="ECO:0007669"/>
    <property type="project" value="UniProtKB-KW"/>
</dbReference>
<dbReference type="GO" id="GO:0006508">
    <property type="term" value="P:proteolysis"/>
    <property type="evidence" value="ECO:0007669"/>
    <property type="project" value="UniProtKB-KW"/>
</dbReference>
<dbReference type="CDD" id="cd08071">
    <property type="entry name" value="MPN_DUF2466"/>
    <property type="match status" value="1"/>
</dbReference>
<dbReference type="Gene3D" id="3.40.140.10">
    <property type="entry name" value="Cytidine Deaminase, domain 2"/>
    <property type="match status" value="1"/>
</dbReference>
<dbReference type="InterPro" id="IPR037518">
    <property type="entry name" value="MPN"/>
</dbReference>
<dbReference type="InterPro" id="IPR025657">
    <property type="entry name" value="RadC_JAB"/>
</dbReference>
<dbReference type="InterPro" id="IPR010994">
    <property type="entry name" value="RuvA_2-like"/>
</dbReference>
<dbReference type="InterPro" id="IPR001405">
    <property type="entry name" value="UPF0758"/>
</dbReference>
<dbReference type="InterPro" id="IPR020891">
    <property type="entry name" value="UPF0758_CS"/>
</dbReference>
<dbReference type="InterPro" id="IPR046778">
    <property type="entry name" value="UPF0758_N"/>
</dbReference>
<dbReference type="NCBIfam" id="NF000642">
    <property type="entry name" value="PRK00024.1"/>
    <property type="match status" value="1"/>
</dbReference>
<dbReference type="NCBIfam" id="TIGR00608">
    <property type="entry name" value="radc"/>
    <property type="match status" value="1"/>
</dbReference>
<dbReference type="PANTHER" id="PTHR30471">
    <property type="entry name" value="DNA REPAIR PROTEIN RADC"/>
    <property type="match status" value="1"/>
</dbReference>
<dbReference type="PANTHER" id="PTHR30471:SF3">
    <property type="entry name" value="UPF0758 PROTEIN YEES-RELATED"/>
    <property type="match status" value="1"/>
</dbReference>
<dbReference type="Pfam" id="PF04002">
    <property type="entry name" value="RadC"/>
    <property type="match status" value="1"/>
</dbReference>
<dbReference type="Pfam" id="PF20582">
    <property type="entry name" value="UPF0758_N"/>
    <property type="match status" value="1"/>
</dbReference>
<dbReference type="SUPFAM" id="SSF102712">
    <property type="entry name" value="JAB1/MPN domain"/>
    <property type="match status" value="1"/>
</dbReference>
<dbReference type="SUPFAM" id="SSF47781">
    <property type="entry name" value="RuvA domain 2-like"/>
    <property type="match status" value="1"/>
</dbReference>
<dbReference type="PROSITE" id="PS50249">
    <property type="entry name" value="MPN"/>
    <property type="match status" value="1"/>
</dbReference>
<dbReference type="PROSITE" id="PS01302">
    <property type="entry name" value="UPF0758"/>
    <property type="match status" value="1"/>
</dbReference>